<dbReference type="EC" id="3.2.1.8"/>
<dbReference type="EMBL" id="AJ006646">
    <property type="protein sequence ID" value="CAA07174.1"/>
    <property type="molecule type" value="Genomic_DNA"/>
</dbReference>
<dbReference type="RefSeq" id="WP_110896347.1">
    <property type="nucleotide sequence ID" value="NZ_CP054614.1"/>
</dbReference>
<dbReference type="PDB" id="3EMC">
    <property type="method" value="X-ray"/>
    <property type="resolution" value="2.10 A"/>
    <property type="chains" value="A=2-332"/>
</dbReference>
<dbReference type="PDB" id="3EMQ">
    <property type="method" value="X-ray"/>
    <property type="resolution" value="2.73 A"/>
    <property type="chains" value="A=2-332"/>
</dbReference>
<dbReference type="PDB" id="3EMZ">
    <property type="method" value="X-ray"/>
    <property type="resolution" value="2.08 A"/>
    <property type="chains" value="A=2-332"/>
</dbReference>
<dbReference type="PDBsum" id="3EMC"/>
<dbReference type="PDBsum" id="3EMQ"/>
<dbReference type="PDBsum" id="3EMZ"/>
<dbReference type="SMR" id="O69231"/>
<dbReference type="CAZy" id="GH10">
    <property type="family name" value="Glycoside Hydrolase Family 10"/>
</dbReference>
<dbReference type="OrthoDB" id="9809277at2"/>
<dbReference type="UniPathway" id="UPA00114"/>
<dbReference type="EvolutionaryTrace" id="O69231"/>
<dbReference type="GO" id="GO:0005737">
    <property type="term" value="C:cytoplasm"/>
    <property type="evidence" value="ECO:0007669"/>
    <property type="project" value="UniProtKB-SubCell"/>
</dbReference>
<dbReference type="GO" id="GO:0031176">
    <property type="term" value="F:endo-1,4-beta-xylanase activity"/>
    <property type="evidence" value="ECO:0007669"/>
    <property type="project" value="UniProtKB-EC"/>
</dbReference>
<dbReference type="GO" id="GO:0045493">
    <property type="term" value="P:xylan catabolic process"/>
    <property type="evidence" value="ECO:0007669"/>
    <property type="project" value="UniProtKB-UniPathway"/>
</dbReference>
<dbReference type="Gene3D" id="3.20.20.80">
    <property type="entry name" value="Glycosidases"/>
    <property type="match status" value="1"/>
</dbReference>
<dbReference type="InterPro" id="IPR044846">
    <property type="entry name" value="GH10"/>
</dbReference>
<dbReference type="InterPro" id="IPR001000">
    <property type="entry name" value="GH10_dom"/>
</dbReference>
<dbReference type="InterPro" id="IPR017853">
    <property type="entry name" value="Glycoside_hydrolase_SF"/>
</dbReference>
<dbReference type="PANTHER" id="PTHR31490:SF90">
    <property type="entry name" value="ENDO-1,4-BETA-XYLANASE A"/>
    <property type="match status" value="1"/>
</dbReference>
<dbReference type="PANTHER" id="PTHR31490">
    <property type="entry name" value="GLYCOSYL HYDROLASE"/>
    <property type="match status" value="1"/>
</dbReference>
<dbReference type="Pfam" id="PF00331">
    <property type="entry name" value="Glyco_hydro_10"/>
    <property type="match status" value="1"/>
</dbReference>
<dbReference type="PRINTS" id="PR00134">
    <property type="entry name" value="GLHYDRLASE10"/>
</dbReference>
<dbReference type="SMART" id="SM00633">
    <property type="entry name" value="Glyco_10"/>
    <property type="match status" value="1"/>
</dbReference>
<dbReference type="SUPFAM" id="SSF51445">
    <property type="entry name" value="(Trans)glycosidases"/>
    <property type="match status" value="1"/>
</dbReference>
<dbReference type="PROSITE" id="PS51760">
    <property type="entry name" value="GH10_2"/>
    <property type="match status" value="1"/>
</dbReference>
<protein>
    <recommendedName>
        <fullName>Endo-1,4-beta-xylanase B</fullName>
        <shortName>Xylanase B</shortName>
        <ecNumber>3.2.1.8</ecNumber>
    </recommendedName>
    <alternativeName>
        <fullName>1,4-beta-D-xylan xylanohydrolase B</fullName>
    </alternativeName>
</protein>
<organism>
    <name type="scientific">Paenibacillus barcinonensis</name>
    <dbReference type="NCBI Taxonomy" id="198119"/>
    <lineage>
        <taxon>Bacteria</taxon>
        <taxon>Bacillati</taxon>
        <taxon>Bacillota</taxon>
        <taxon>Bacilli</taxon>
        <taxon>Bacillales</taxon>
        <taxon>Paenibacillaceae</taxon>
        <taxon>Paenibacillus</taxon>
    </lineage>
</organism>
<comment type="function">
    <text evidence="3 4">Plays a role in plant xylan biodegradation, probably via the hydrolysis of short xylooligosaccharides resulting from extracellular xylan hydrolysis, once they have been transported inside cells. Shows similar activity on xylans of different rate of arabinose or methylglucuronic substitution. Also displays high activity on aryl-xylosides. Is active on xylotetraose and xylotriose, but does not hydrolyze xylobiose, indicating that XynB is a xylanase and not a beta-xylosidase.</text>
</comment>
<comment type="catalytic activity">
    <reaction evidence="3 4">
        <text>Endohydrolysis of (1-&gt;4)-beta-D-xylosidic linkages in xylans.</text>
        <dbReference type="EC" id="3.2.1.8"/>
    </reaction>
</comment>
<comment type="activity regulation">
    <text evidence="4">Completely inhibited by Ag(2+), Cu(2+), Hg(2+), Mn(2+), Pb(2+) and Sn(2+). Strongly inhibited by Fe(2+) and Zn(2+). Co(2+) and Ni(2+) cause little inhibition while Ca(2+) and Mg(2+) do not affect enzyme activity, and Ba(2+) produces a small stimulating effect. Irreversibly inactivated by SDS in vitro.</text>
</comment>
<comment type="biophysicochemical properties">
    <phDependence>
        <text evidence="4">Optimum pH is 5.5. Shows more than 75% of maximum activity from pH 5 to 10. Is still active at pH 12.</text>
    </phDependence>
    <temperatureDependence>
        <text evidence="4">Optimum temperature is 50 degrees Celsius. Loses 100% activity after incubation for 15 minutes at 50 degrees Celsius.</text>
    </temperatureDependence>
</comment>
<comment type="pathway">
    <text>Glycan degradation; xylan degradation.</text>
</comment>
<comment type="subcellular location">
    <subcellularLocation>
        <location evidence="3">Cytoplasm</location>
    </subcellularLocation>
    <text>Is not secreted to the medium but instead remains cell-associated, in the soluble fraction, even in late stationary-phase cultures.</text>
</comment>
<comment type="similarity">
    <text evidence="5">Belongs to the glycosyl hydrolase 10 (cellulase F) family. Cytoplasmic xylanase subfamily.</text>
</comment>
<feature type="initiator methionine" description="Removed" evidence="3">
    <location>
        <position position="1"/>
    </location>
</feature>
<feature type="chain" id="PRO_0000366196" description="Endo-1,4-beta-xylanase B">
    <location>
        <begin position="2"/>
        <end position="332"/>
    </location>
</feature>
<feature type="domain" description="GH10" evidence="2">
    <location>
        <begin position="2"/>
        <end position="331"/>
    </location>
</feature>
<feature type="active site" description="Proton donor" evidence="1">
    <location>
        <position position="134"/>
    </location>
</feature>
<feature type="active site" description="Nucleophile" evidence="1">
    <location>
        <position position="241"/>
    </location>
</feature>
<feature type="helix" evidence="8">
    <location>
        <begin position="10"/>
        <end position="12"/>
    </location>
</feature>
<feature type="turn" evidence="8">
    <location>
        <begin position="13"/>
        <end position="15"/>
    </location>
</feature>
<feature type="strand" evidence="8">
    <location>
        <begin position="17"/>
        <end position="22"/>
    </location>
</feature>
<feature type="helix" evidence="8">
    <location>
        <begin position="24"/>
        <end position="37"/>
    </location>
</feature>
<feature type="strand" evidence="8">
    <location>
        <begin position="39"/>
        <end position="45"/>
    </location>
</feature>
<feature type="helix" evidence="8">
    <location>
        <begin position="49"/>
        <end position="52"/>
    </location>
</feature>
<feature type="strand" evidence="7">
    <location>
        <begin position="54"/>
        <end position="57"/>
    </location>
</feature>
<feature type="helix" evidence="8">
    <location>
        <begin position="62"/>
        <end position="72"/>
    </location>
</feature>
<feature type="turn" evidence="8">
    <location>
        <begin position="73"/>
        <end position="75"/>
    </location>
</feature>
<feature type="strand" evidence="8">
    <location>
        <begin position="77"/>
        <end position="80"/>
    </location>
</feature>
<feature type="strand" evidence="8">
    <location>
        <begin position="86"/>
        <end position="88"/>
    </location>
</feature>
<feature type="helix" evidence="8">
    <location>
        <begin position="91"/>
        <end position="94"/>
    </location>
</feature>
<feature type="strand" evidence="8">
    <location>
        <begin position="99"/>
        <end position="101"/>
    </location>
</feature>
<feature type="helix" evidence="8">
    <location>
        <begin position="104"/>
        <end position="121"/>
    </location>
</feature>
<feature type="turn" evidence="8">
    <location>
        <begin position="122"/>
        <end position="125"/>
    </location>
</feature>
<feature type="strand" evidence="8">
    <location>
        <begin position="127"/>
        <end position="133"/>
    </location>
</feature>
<feature type="helix" evidence="8">
    <location>
        <begin position="148"/>
        <end position="152"/>
    </location>
</feature>
<feature type="helix" evidence="8">
    <location>
        <begin position="157"/>
        <end position="168"/>
    </location>
</feature>
<feature type="strand" evidence="8">
    <location>
        <begin position="172"/>
        <end position="180"/>
    </location>
</feature>
<feature type="helix" evidence="8">
    <location>
        <begin position="184"/>
        <end position="199"/>
    </location>
</feature>
<feature type="strand" evidence="8">
    <location>
        <begin position="206"/>
        <end position="209"/>
    </location>
</feature>
<feature type="strand" evidence="8">
    <location>
        <begin position="212"/>
        <end position="214"/>
    </location>
</feature>
<feature type="helix" evidence="8">
    <location>
        <begin position="220"/>
        <end position="231"/>
    </location>
</feature>
<feature type="turn" evidence="6">
    <location>
        <begin position="232"/>
        <end position="234"/>
    </location>
</feature>
<feature type="strand" evidence="8">
    <location>
        <begin position="236"/>
        <end position="247"/>
    </location>
</feature>
<feature type="helix" evidence="8">
    <location>
        <begin position="261"/>
        <end position="280"/>
    </location>
</feature>
<feature type="turn" evidence="8">
    <location>
        <begin position="281"/>
        <end position="284"/>
    </location>
</feature>
<feature type="strand" evidence="8">
    <location>
        <begin position="285"/>
        <end position="294"/>
    </location>
</feature>
<feature type="helix" evidence="8">
    <location>
        <begin position="299"/>
        <end position="301"/>
    </location>
</feature>
<feature type="strand" evidence="8">
    <location>
        <begin position="302"/>
        <end position="305"/>
    </location>
</feature>
<feature type="strand" evidence="8">
    <location>
        <begin position="313"/>
        <end position="315"/>
    </location>
</feature>
<feature type="helix" evidence="8">
    <location>
        <begin position="323"/>
        <end position="328"/>
    </location>
</feature>
<name>XYNB_PAEBA</name>
<reference key="1">
    <citation type="journal article" date="2003" name="Appl. Microbiol. Biotechnol.">
        <title>Characterization of a Paenibacillus cell-associated xylanase with high activity on aryl-xylosides: a new subclass of family 10 xylanases.</title>
        <authorList>
            <person name="Gallardo O."/>
            <person name="Diaz P."/>
            <person name="Pastor F.I.J."/>
        </authorList>
    </citation>
    <scope>NUCLEOTIDE SEQUENCE [GENOMIC DNA]</scope>
    <scope>PROTEIN SEQUENCE OF 2-11</scope>
    <scope>FUNCTION</scope>
    <scope>CATALYTIC ACTIVITY</scope>
    <scope>SUBSTRATE SPECIFICITY</scope>
    <scope>SUBCELLULAR LOCATION</scope>
    <source>
        <strain>DSM 15478 / BCRC 17560 / CECT 7022 / CIP 108718 / BP-23</strain>
    </source>
</reference>
<reference key="2">
    <citation type="journal article" date="1996" name="FEMS Microbiol. Lett.">
        <title>Cloning of a Bacillus sp. BP-23 gene encoding a xylanase with high activity against aryl xylosides.</title>
        <authorList>
            <person name="Blanco A."/>
            <person name="Diaz P."/>
            <person name="Martinez J."/>
            <person name="Lopez O."/>
            <person name="Soler C."/>
            <person name="Pastor F.I.J."/>
        </authorList>
    </citation>
    <scope>FUNCTION</scope>
    <scope>CATALYTIC ACTIVITY</scope>
    <scope>SUBSTRATE SPECIFICITY</scope>
    <scope>ACTIVITY REGULATION</scope>
    <scope>BIOPHYSICOCHEMICAL PROPERTIES</scope>
    <source>
        <strain>DSM 15478 / BCRC 17560 / CECT 7022 / CIP 108718 / BP-23</strain>
    </source>
</reference>
<gene>
    <name type="primary">xynB</name>
</gene>
<accession>O69231</accession>
<keyword id="KW-0002">3D-structure</keyword>
<keyword id="KW-0119">Carbohydrate metabolism</keyword>
<keyword id="KW-0963">Cytoplasm</keyword>
<keyword id="KW-0903">Direct protein sequencing</keyword>
<keyword id="KW-0326">Glycosidase</keyword>
<keyword id="KW-0378">Hydrolase</keyword>
<keyword id="KW-0624">Polysaccharide degradation</keyword>
<keyword id="KW-0858">Xylan degradation</keyword>
<sequence length="332" mass="38561">MSTEIPSLSASYANSFKIGAAVHTRMLQTEGEFIAKHYNSVTAENQMKFEEVHPREHEYTFEAADEIVDFAVARGIGVRGHTLVWHNQTPAWMFEDASGGTASREMMLSRLKQHIDTVVGRYKDQIYAWDVVNEAIEDKTDLIMRDTKWLRLLGEDYLVQAFNMAHEADPNALLFYNDYNETDPVKREKIYNLVRSLLDQGAPVHGIGMQGHWNIHGPSMDEIRQAIERYASLDVQLHVTELDLSVFRHEDQRTDLTEPTAEMAELQQKRYEDIFGLFREYRSNITSVTFWGVADNYTWLDNFPVRGRKNWPFVFDTELQPKDSFWRIIGQD</sequence>
<proteinExistence type="evidence at protein level"/>
<evidence type="ECO:0000250" key="1"/>
<evidence type="ECO:0000255" key="2">
    <source>
        <dbReference type="PROSITE-ProRule" id="PRU01096"/>
    </source>
</evidence>
<evidence type="ECO:0000269" key="3">
    <source>
    </source>
</evidence>
<evidence type="ECO:0000269" key="4">
    <source>
    </source>
</evidence>
<evidence type="ECO:0000305" key="5"/>
<evidence type="ECO:0007829" key="6">
    <source>
        <dbReference type="PDB" id="3EMC"/>
    </source>
</evidence>
<evidence type="ECO:0007829" key="7">
    <source>
        <dbReference type="PDB" id="3EMQ"/>
    </source>
</evidence>
<evidence type="ECO:0007829" key="8">
    <source>
        <dbReference type="PDB" id="3EMZ"/>
    </source>
</evidence>